<name>MOC2A_DROSE</name>
<gene>
    <name evidence="1" type="primary">Mocs2A</name>
    <name evidence="2" type="synonym">Mocs2</name>
    <name type="ORF">GM17747</name>
</gene>
<keyword id="KW-0963">Cytoplasm</keyword>
<keyword id="KW-0501">Molybdenum cofactor biosynthesis</keyword>
<keyword id="KW-0547">Nucleotide-binding</keyword>
<keyword id="KW-0597">Phosphoprotein</keyword>
<keyword id="KW-1185">Reference proteome</keyword>
<proteinExistence type="inferred from homology"/>
<evidence type="ECO:0000250" key="1">
    <source>
        <dbReference type="UniProtKB" id="P0C919"/>
    </source>
</evidence>
<evidence type="ECO:0000255" key="2">
    <source>
        <dbReference type="HAMAP-Rule" id="MF_03051"/>
    </source>
</evidence>
<organism>
    <name type="scientific">Drosophila sechellia</name>
    <name type="common">Fruit fly</name>
    <dbReference type="NCBI Taxonomy" id="7238"/>
    <lineage>
        <taxon>Eukaryota</taxon>
        <taxon>Metazoa</taxon>
        <taxon>Ecdysozoa</taxon>
        <taxon>Arthropoda</taxon>
        <taxon>Hexapoda</taxon>
        <taxon>Insecta</taxon>
        <taxon>Pterygota</taxon>
        <taxon>Neoptera</taxon>
        <taxon>Endopterygota</taxon>
        <taxon>Diptera</taxon>
        <taxon>Brachycera</taxon>
        <taxon>Muscomorpha</taxon>
        <taxon>Ephydroidea</taxon>
        <taxon>Drosophilidae</taxon>
        <taxon>Drosophila</taxon>
        <taxon>Sophophora</taxon>
    </lineage>
</organism>
<dbReference type="EMBL" id="CH480848">
    <property type="protein sequence ID" value="EDW51159.1"/>
    <property type="molecule type" value="Genomic_DNA"/>
</dbReference>
<dbReference type="SMR" id="B4IJG8"/>
<dbReference type="STRING" id="7238.B4IJG8"/>
<dbReference type="EnsemblMetazoa" id="FBtr0200732">
    <property type="protein sequence ID" value="FBpp0199224"/>
    <property type="gene ID" value="FBgn0172655"/>
</dbReference>
<dbReference type="EnsemblMetazoa" id="XM_002043842.2">
    <property type="protein sequence ID" value="XP_002043878.1"/>
    <property type="gene ID" value="LOC6619663"/>
</dbReference>
<dbReference type="GeneID" id="6619663"/>
<dbReference type="KEGG" id="dse:6619663"/>
<dbReference type="CTD" id="8674021"/>
<dbReference type="HOGENOM" id="CLU_114601_4_3_1"/>
<dbReference type="OMA" id="HVLFFAK"/>
<dbReference type="OrthoDB" id="9833at7215"/>
<dbReference type="PhylomeDB" id="B4IJG8"/>
<dbReference type="UniPathway" id="UPA00344"/>
<dbReference type="Proteomes" id="UP000001292">
    <property type="component" value="Unassembled WGS sequence"/>
</dbReference>
<dbReference type="GO" id="GO:0005829">
    <property type="term" value="C:cytosol"/>
    <property type="evidence" value="ECO:0000250"/>
    <property type="project" value="UniProtKB"/>
</dbReference>
<dbReference type="GO" id="GO:1990133">
    <property type="term" value="C:molybdopterin adenylyltransferase complex"/>
    <property type="evidence" value="ECO:0007669"/>
    <property type="project" value="TreeGrafter"/>
</dbReference>
<dbReference type="GO" id="GO:1990140">
    <property type="term" value="C:molybdopterin synthase complex"/>
    <property type="evidence" value="ECO:0000250"/>
    <property type="project" value="UniProtKB"/>
</dbReference>
<dbReference type="GO" id="GO:0030366">
    <property type="term" value="F:molybdopterin synthase activity"/>
    <property type="evidence" value="ECO:0007669"/>
    <property type="project" value="UniProtKB-UniRule"/>
</dbReference>
<dbReference type="GO" id="GO:0000166">
    <property type="term" value="F:nucleotide binding"/>
    <property type="evidence" value="ECO:0007669"/>
    <property type="project" value="UniProtKB-KW"/>
</dbReference>
<dbReference type="GO" id="GO:0006777">
    <property type="term" value="P:Mo-molybdopterin cofactor biosynthetic process"/>
    <property type="evidence" value="ECO:0000250"/>
    <property type="project" value="UniProtKB"/>
</dbReference>
<dbReference type="CDD" id="cd00754">
    <property type="entry name" value="Ubl_MoaD"/>
    <property type="match status" value="1"/>
</dbReference>
<dbReference type="FunFam" id="3.10.20.30:FF:000010">
    <property type="entry name" value="Molybdopterin synthase sulfur carrier subunit"/>
    <property type="match status" value="1"/>
</dbReference>
<dbReference type="Gene3D" id="3.10.20.30">
    <property type="match status" value="1"/>
</dbReference>
<dbReference type="HAMAP" id="MF_03051">
    <property type="entry name" value="MOCS2A"/>
    <property type="match status" value="1"/>
</dbReference>
<dbReference type="InterPro" id="IPR012675">
    <property type="entry name" value="Beta-grasp_dom_sf"/>
</dbReference>
<dbReference type="InterPro" id="IPR044672">
    <property type="entry name" value="MOCS2A"/>
</dbReference>
<dbReference type="InterPro" id="IPR028887">
    <property type="entry name" value="MOCS2A_euk"/>
</dbReference>
<dbReference type="InterPro" id="IPR016155">
    <property type="entry name" value="Mopterin_synth/thiamin_S_b"/>
</dbReference>
<dbReference type="InterPro" id="IPR003749">
    <property type="entry name" value="ThiS/MoaD-like"/>
</dbReference>
<dbReference type="NCBIfam" id="TIGR01682">
    <property type="entry name" value="moaD"/>
    <property type="match status" value="1"/>
</dbReference>
<dbReference type="PANTHER" id="PTHR33359">
    <property type="entry name" value="MOLYBDOPTERIN SYNTHASE SULFUR CARRIER SUBUNIT"/>
    <property type="match status" value="1"/>
</dbReference>
<dbReference type="PANTHER" id="PTHR33359:SF1">
    <property type="entry name" value="MOLYBDOPTERIN SYNTHASE SULFUR CARRIER SUBUNIT"/>
    <property type="match status" value="1"/>
</dbReference>
<dbReference type="Pfam" id="PF02597">
    <property type="entry name" value="ThiS"/>
    <property type="match status" value="1"/>
</dbReference>
<dbReference type="SUPFAM" id="SSF54285">
    <property type="entry name" value="MoaD/ThiS"/>
    <property type="match status" value="1"/>
</dbReference>
<protein>
    <recommendedName>
        <fullName evidence="2">Molybdopterin synthase sulfur carrier subunit</fullName>
    </recommendedName>
    <alternativeName>
        <fullName evidence="2">Molybdenum cofactor synthesis protein 2 small subunit</fullName>
    </alternativeName>
    <alternativeName>
        <fullName evidence="2">Molybdenum cofactor synthesis protein 2A</fullName>
        <shortName evidence="2">MOCS2A</shortName>
    </alternativeName>
    <alternativeName>
        <fullName evidence="2">Sulfur carrier protein MOCS2A</fullName>
    </alternativeName>
</protein>
<accession>B4IJG8</accession>
<reference key="1">
    <citation type="journal article" date="2007" name="Nature">
        <title>Evolution of genes and genomes on the Drosophila phylogeny.</title>
        <authorList>
            <consortium name="Drosophila 12 genomes consortium"/>
        </authorList>
    </citation>
    <scope>NUCLEOTIDE SEQUENCE [LARGE SCALE GENOMIC DNA]</scope>
    <source>
        <strain>Rob3c / Tucson 14021-0248.25</strain>
    </source>
</reference>
<feature type="chain" id="PRO_0000369313" description="Molybdopterin synthase sulfur carrier subunit">
    <location>
        <begin position="1"/>
        <end position="90"/>
    </location>
</feature>
<feature type="modified residue" description="1-thioglycine; alternate" evidence="2">
    <location>
        <position position="90"/>
    </location>
</feature>
<feature type="modified residue" description="Glycyl adenylate; alternate" evidence="2">
    <location>
        <position position="90"/>
    </location>
</feature>
<sequence length="90" mass="9855">MNADGPVVNVHVLFFAKSRELANTPRSTVDVPTEITANELLDHLVSKFGLISIRDNLILAHNESYIDNLSDRILFKEGDELAVIPPLSGG</sequence>
<comment type="function">
    <text evidence="2">Acts as a sulfur carrier required for molybdopterin biosynthesis. Component of the molybdopterin synthase complex that catalyzes the conversion of precursor Z into molybdopterin by mediating the incorporation of 2 sulfur atoms into precursor Z to generate a dithiolene group. In the complex, serves as sulfur donor by being thiocarboxylated (-COSH) at its C-terminus by MOCS3. After interaction with Mocs2B, the sulfur is then transferred to precursor Z to form molybdopterin.</text>
</comment>
<comment type="pathway">
    <text evidence="2">Cofactor biosynthesis; molybdopterin biosynthesis.</text>
</comment>
<comment type="subunit">
    <text evidence="2">Heterotetramer; composed of 2 small (Mocs2A) and 2 large (Mocs2B) subunits.</text>
</comment>
<comment type="subcellular location">
    <subcellularLocation>
        <location evidence="2">Cytoplasm</location>
    </subcellularLocation>
</comment>
<comment type="PTM">
    <text evidence="2">C-terminal thiocarboxylation occurs in 2 steps, it is first acyl-adenylated (-COAMP) via the hesA/moeB/thiF part of MOCS3, then thiocarboxylated (-COSH) via the rhodanese domain of MOCS3.</text>
</comment>
<comment type="miscellaneous">
    <text>This protein is produced by a bicistronic gene which also produces the large subunit (Mocs2B).</text>
</comment>
<comment type="similarity">
    <text evidence="2">Belongs to the MoaD family. MOCS2A subfamily.</text>
</comment>